<proteinExistence type="evidence at transcript level"/>
<protein>
    <recommendedName>
        <fullName>Phytochrome A</fullName>
    </recommendedName>
</protein>
<organism>
    <name type="scientific">Solanum tuberosum</name>
    <name type="common">Potato</name>
    <dbReference type="NCBI Taxonomy" id="4113"/>
    <lineage>
        <taxon>Eukaryota</taxon>
        <taxon>Viridiplantae</taxon>
        <taxon>Streptophyta</taxon>
        <taxon>Embryophyta</taxon>
        <taxon>Tracheophyta</taxon>
        <taxon>Spermatophyta</taxon>
        <taxon>Magnoliopsida</taxon>
        <taxon>eudicotyledons</taxon>
        <taxon>Gunneridae</taxon>
        <taxon>Pentapetalae</taxon>
        <taxon>asterids</taxon>
        <taxon>lamiids</taxon>
        <taxon>Solanales</taxon>
        <taxon>Solanaceae</taxon>
        <taxon>Solanoideae</taxon>
        <taxon>Solaneae</taxon>
        <taxon>Solanum</taxon>
    </lineage>
</organism>
<name>PHYA_SOLTU</name>
<reference key="1">
    <citation type="journal article" date="1992" name="Plant Mol. Biol.">
        <title>Isolation and characterization of a cDNA-clone coding for potato type A phytochrome.</title>
        <authorList>
            <person name="Heyer A."/>
            <person name="Gatz C."/>
        </authorList>
    </citation>
    <scope>NUCLEOTIDE SEQUENCE [MRNA]</scope>
    <source>
        <strain>cv. Desiree</strain>
    </source>
</reference>
<sequence length="1123" mass="124690">MSSSRPSQSSTTSSRSKHSARIIAQTSIDAKLHADFEESGDSFDYSSSVRVTNVAEGEQRPKSDKVTTAYLHQIQKGKFIQPFGCLLALDEKTLKVIAFSENAPEMLTMVSHAVPSVGEHPVLGIGIDIRTIFTGPSGAALQKALGFGEVSLLNPVLVHCKNSGKPFYAIVHRVTGSLIIDFEPVKPYEVPMTAAGALQSYKLAAKAITRLQSLPSGSMERLCDTMVQEVFELTGYDRVMGYKFHDDDHGEVVSEITKPGLEPYLGLHYPATDIPQAARFLFMKNKVRMICDCRAKHVKVVQDEKLPFDLTLCGSTLRAPHYCHLQYMENMNSIASLVMAVVVNDGDEEGESSDSSQSQKRKRLWGLVVSHNTTPRFAPFPLRYACEFLAQVFAILVNKELELENQFLEKNILRTQTLLCDMLMRDAPLGIVSQSPNIMDLIKCDGAALLYKNKIHRLGMNPSDFQLHDIVSWLCEYHTDSTGLSTDSLYDAGFPGALALGDAVCGMAAVRISDKDWLFWYRSHTAAEVRWGGAKHEPGEKDDGRKMHPRSSFKGFLEVVKTRSIPWKDYEMDRIHSLQLILRNAFKDADAVNSNTISIHTKLNDLKIDGMQELEAVTAEMVRLIETASVPIFAVDVDGQVNGWNTKVAELTGLPVDEAIGKHLLTLVEDSSVDTVNKMLELALQGQEERNVEFEIKTHGPSRDSSPISLIVNACASKDVRDSVVGVCFIAQDITGQKSIMDKFTRIEGDYRAIIQNPHPLIPPIFGTDQFGWCSEWNSAMTMLTGWRRDDVMDKMLLGEVFGTQAACCRLKNQEAFVNFGVILNNAITGQESEKIPFGFFARYGKYVECLLCVSKRLDKEGAVTGLFCFLQLASHELQQALHVQRLSEQTALKRLKVLAYIRRQIRNPLSGIIFSRKMLEGTSLGEEQKNILHTSAQCQRQLDKILDDTDLDSIIEGYLDLEMLEFKLHEVLVASISQVMMKSNGKNIMISNDMVEDLLNETLYGDSPRLQQVLANFLLVSVNSTPSGGKLSISGKLTKDRIGESVQLALLEFRIRHTGGGVPEELLSQMFGSEADASEEGISLLVSRKLVKLMNGEVQYLREAGRSTFIISVELAVATKSS</sequence>
<feature type="chain" id="PRO_0000171992" description="Phytochrome A">
    <location>
        <begin position="1"/>
        <end position="1123"/>
    </location>
</feature>
<feature type="domain" description="GAF">
    <location>
        <begin position="218"/>
        <end position="401"/>
    </location>
</feature>
<feature type="domain" description="PAS 1" evidence="3">
    <location>
        <begin position="617"/>
        <end position="687"/>
    </location>
</feature>
<feature type="domain" description="PAC" evidence="4">
    <location>
        <begin position="690"/>
        <end position="746"/>
    </location>
</feature>
<feature type="domain" description="PAS 2" evidence="3">
    <location>
        <begin position="747"/>
        <end position="821"/>
    </location>
</feature>
<feature type="domain" description="Histidine kinase" evidence="2">
    <location>
        <begin position="901"/>
        <end position="1118"/>
    </location>
</feature>
<feature type="region of interest" description="Disordered" evidence="5">
    <location>
        <begin position="1"/>
        <end position="20"/>
    </location>
</feature>
<feature type="compositionally biased region" description="Low complexity" evidence="5">
    <location>
        <begin position="1"/>
        <end position="14"/>
    </location>
</feature>
<feature type="binding site" description="covalent" evidence="1">
    <location>
        <position position="323"/>
    </location>
    <ligand>
        <name>phytochromobilin</name>
        <dbReference type="ChEBI" id="CHEBI:189064"/>
    </ligand>
</feature>
<evidence type="ECO:0000250" key="1"/>
<evidence type="ECO:0000255" key="2">
    <source>
        <dbReference type="PROSITE-ProRule" id="PRU00107"/>
    </source>
</evidence>
<evidence type="ECO:0000255" key="3">
    <source>
        <dbReference type="PROSITE-ProRule" id="PRU00140"/>
    </source>
</evidence>
<evidence type="ECO:0000255" key="4">
    <source>
        <dbReference type="PROSITE-ProRule" id="PRU00141"/>
    </source>
</evidence>
<evidence type="ECO:0000256" key="5">
    <source>
        <dbReference type="SAM" id="MobiDB-lite"/>
    </source>
</evidence>
<evidence type="ECO:0000305" key="6"/>
<gene>
    <name type="primary">PHYA</name>
</gene>
<dbReference type="EMBL" id="S84872">
    <property type="protein sequence ID" value="AAB21533.2"/>
    <property type="molecule type" value="mRNA"/>
</dbReference>
<dbReference type="PIR" id="S20497">
    <property type="entry name" value="S20497"/>
</dbReference>
<dbReference type="SMR" id="P30733"/>
<dbReference type="FunCoup" id="P30733">
    <property type="interactions" value="103"/>
</dbReference>
<dbReference type="IntAct" id="P30733">
    <property type="interactions" value="9"/>
</dbReference>
<dbReference type="STRING" id="4113.P30733"/>
<dbReference type="PaxDb" id="4113-PGSC0003DMT400040772"/>
<dbReference type="eggNOG" id="ENOG502QRSA">
    <property type="taxonomic scope" value="Eukaryota"/>
</dbReference>
<dbReference type="InParanoid" id="P30733"/>
<dbReference type="Proteomes" id="UP000011115">
    <property type="component" value="Unassembled WGS sequence"/>
</dbReference>
<dbReference type="ExpressionAtlas" id="P30733">
    <property type="expression patterns" value="baseline"/>
</dbReference>
<dbReference type="GO" id="GO:0005634">
    <property type="term" value="C:nucleus"/>
    <property type="evidence" value="ECO:0000318"/>
    <property type="project" value="GO_Central"/>
</dbReference>
<dbReference type="GO" id="GO:0000155">
    <property type="term" value="F:phosphorelay sensor kinase activity"/>
    <property type="evidence" value="ECO:0007669"/>
    <property type="project" value="InterPro"/>
</dbReference>
<dbReference type="GO" id="GO:0009881">
    <property type="term" value="F:photoreceptor activity"/>
    <property type="evidence" value="ECO:0007669"/>
    <property type="project" value="UniProtKB-KW"/>
</dbReference>
<dbReference type="GO" id="GO:0042803">
    <property type="term" value="F:protein homodimerization activity"/>
    <property type="evidence" value="ECO:0007669"/>
    <property type="project" value="InterPro"/>
</dbReference>
<dbReference type="GO" id="GO:0009584">
    <property type="term" value="P:detection of visible light"/>
    <property type="evidence" value="ECO:0007669"/>
    <property type="project" value="InterPro"/>
</dbReference>
<dbReference type="GO" id="GO:0009585">
    <property type="term" value="P:red, far-red light phototransduction"/>
    <property type="evidence" value="ECO:0007669"/>
    <property type="project" value="InterPro"/>
</dbReference>
<dbReference type="GO" id="GO:0006355">
    <property type="term" value="P:regulation of DNA-templated transcription"/>
    <property type="evidence" value="ECO:0007669"/>
    <property type="project" value="InterPro"/>
</dbReference>
<dbReference type="CDD" id="cd00082">
    <property type="entry name" value="HisKA"/>
    <property type="match status" value="1"/>
</dbReference>
<dbReference type="CDD" id="cd00130">
    <property type="entry name" value="PAS"/>
    <property type="match status" value="2"/>
</dbReference>
<dbReference type="FunFam" id="3.30.450.20:FF:000039">
    <property type="entry name" value="Phytochrome"/>
    <property type="match status" value="1"/>
</dbReference>
<dbReference type="FunFam" id="3.30.450.270:FF:000001">
    <property type="entry name" value="Phytochrome"/>
    <property type="match status" value="1"/>
</dbReference>
<dbReference type="Gene3D" id="1.10.287.130">
    <property type="match status" value="1"/>
</dbReference>
<dbReference type="Gene3D" id="3.30.450.270">
    <property type="match status" value="1"/>
</dbReference>
<dbReference type="Gene3D" id="3.30.450.40">
    <property type="match status" value="1"/>
</dbReference>
<dbReference type="Gene3D" id="3.30.565.10">
    <property type="entry name" value="Histidine kinase-like ATPase, C-terminal domain"/>
    <property type="match status" value="1"/>
</dbReference>
<dbReference type="Gene3D" id="3.30.450.20">
    <property type="entry name" value="PAS domain"/>
    <property type="match status" value="2"/>
</dbReference>
<dbReference type="InterPro" id="IPR003018">
    <property type="entry name" value="GAF"/>
</dbReference>
<dbReference type="InterPro" id="IPR029016">
    <property type="entry name" value="GAF-like_dom_sf"/>
</dbReference>
<dbReference type="InterPro" id="IPR036890">
    <property type="entry name" value="HATPase_C_sf"/>
</dbReference>
<dbReference type="InterPro" id="IPR005467">
    <property type="entry name" value="His_kinase_dom"/>
</dbReference>
<dbReference type="InterPro" id="IPR003661">
    <property type="entry name" value="HisK_dim/P_dom"/>
</dbReference>
<dbReference type="InterPro" id="IPR000014">
    <property type="entry name" value="PAS"/>
</dbReference>
<dbReference type="InterPro" id="IPR000700">
    <property type="entry name" value="PAS-assoc_C"/>
</dbReference>
<dbReference type="InterPro" id="IPR035965">
    <property type="entry name" value="PAS-like_dom_sf"/>
</dbReference>
<dbReference type="InterPro" id="IPR013654">
    <property type="entry name" value="PAS_2"/>
</dbReference>
<dbReference type="InterPro" id="IPR013767">
    <property type="entry name" value="PAS_fold"/>
</dbReference>
<dbReference type="InterPro" id="IPR016132">
    <property type="entry name" value="Phyto_chromo_attachment"/>
</dbReference>
<dbReference type="InterPro" id="IPR013516">
    <property type="entry name" value="Phyto_chromo_BS"/>
</dbReference>
<dbReference type="InterPro" id="IPR001294">
    <property type="entry name" value="Phytochrome"/>
</dbReference>
<dbReference type="InterPro" id="IPR012129">
    <property type="entry name" value="Phytochrome_A-E"/>
</dbReference>
<dbReference type="InterPro" id="IPR013515">
    <property type="entry name" value="Phytochrome_cen-reg"/>
</dbReference>
<dbReference type="InterPro" id="IPR043150">
    <property type="entry name" value="Phytochrome_PHY_sf"/>
</dbReference>
<dbReference type="NCBIfam" id="TIGR00229">
    <property type="entry name" value="sensory_box"/>
    <property type="match status" value="1"/>
</dbReference>
<dbReference type="PANTHER" id="PTHR47876">
    <property type="entry name" value="OS08G0260000 PROTEIN"/>
    <property type="match status" value="1"/>
</dbReference>
<dbReference type="PANTHER" id="PTHR47876:SF3">
    <property type="entry name" value="PHYTOCHROME 1"/>
    <property type="match status" value="1"/>
</dbReference>
<dbReference type="Pfam" id="PF01590">
    <property type="entry name" value="GAF"/>
    <property type="match status" value="1"/>
</dbReference>
<dbReference type="Pfam" id="PF02518">
    <property type="entry name" value="HATPase_c"/>
    <property type="match status" value="1"/>
</dbReference>
<dbReference type="Pfam" id="PF00512">
    <property type="entry name" value="HisKA"/>
    <property type="match status" value="1"/>
</dbReference>
<dbReference type="Pfam" id="PF00989">
    <property type="entry name" value="PAS"/>
    <property type="match status" value="2"/>
</dbReference>
<dbReference type="Pfam" id="PF08446">
    <property type="entry name" value="PAS_2"/>
    <property type="match status" value="1"/>
</dbReference>
<dbReference type="Pfam" id="PF00360">
    <property type="entry name" value="PHY"/>
    <property type="match status" value="1"/>
</dbReference>
<dbReference type="PIRSF" id="PIRSF000084">
    <property type="entry name" value="Phytochrome"/>
    <property type="match status" value="1"/>
</dbReference>
<dbReference type="PRINTS" id="PR01033">
    <property type="entry name" value="PHYTOCHROME"/>
</dbReference>
<dbReference type="SMART" id="SM00065">
    <property type="entry name" value="GAF"/>
    <property type="match status" value="1"/>
</dbReference>
<dbReference type="SMART" id="SM00387">
    <property type="entry name" value="HATPase_c"/>
    <property type="match status" value="1"/>
</dbReference>
<dbReference type="SMART" id="SM00388">
    <property type="entry name" value="HisKA"/>
    <property type="match status" value="1"/>
</dbReference>
<dbReference type="SMART" id="SM00091">
    <property type="entry name" value="PAS"/>
    <property type="match status" value="2"/>
</dbReference>
<dbReference type="SUPFAM" id="SSF55874">
    <property type="entry name" value="ATPase domain of HSP90 chaperone/DNA topoisomerase II/histidine kinase"/>
    <property type="match status" value="1"/>
</dbReference>
<dbReference type="SUPFAM" id="SSF55781">
    <property type="entry name" value="GAF domain-like"/>
    <property type="match status" value="2"/>
</dbReference>
<dbReference type="SUPFAM" id="SSF55785">
    <property type="entry name" value="PYP-like sensor domain (PAS domain)"/>
    <property type="match status" value="3"/>
</dbReference>
<dbReference type="PROSITE" id="PS50109">
    <property type="entry name" value="HIS_KIN"/>
    <property type="match status" value="1"/>
</dbReference>
<dbReference type="PROSITE" id="PS50113">
    <property type="entry name" value="PAC"/>
    <property type="match status" value="1"/>
</dbReference>
<dbReference type="PROSITE" id="PS50112">
    <property type="entry name" value="PAS"/>
    <property type="match status" value="2"/>
</dbReference>
<dbReference type="PROSITE" id="PS00245">
    <property type="entry name" value="PHYTOCHROME_1"/>
    <property type="match status" value="1"/>
</dbReference>
<dbReference type="PROSITE" id="PS50046">
    <property type="entry name" value="PHYTOCHROME_2"/>
    <property type="match status" value="1"/>
</dbReference>
<accession>P30733</accession>
<comment type="function">
    <text>Regulatory photoreceptor which exists in two forms that are reversibly interconvertible by light: the Pr form that absorbs maximally in the red region of the spectrum and the Pfr form that absorbs maximally in the far-red region. Photoconversion of Pr to Pfr induces an array of morphogenic responses, whereas reconversion of Pfr to Pr cancels the induction of those responses. Pfr controls the expression of a number of nuclear genes including those encoding the small subunit of ribulose-bisphosphate carboxylase, chlorophyll A/B binding protein, protochlorophyllide reductase, rRNA, etc. It also controls the expression of its own gene(s) in a negative feedback fashion.</text>
</comment>
<comment type="subunit">
    <text>Homodimer.</text>
</comment>
<comment type="PTM">
    <text evidence="1">Contains one covalently linked phytochromobilin chromophore.</text>
</comment>
<comment type="similarity">
    <text evidence="6">Belongs to the phytochrome family.</text>
</comment>
<keyword id="KW-0157">Chromophore</keyword>
<keyword id="KW-0600">Photoreceptor protein</keyword>
<keyword id="KW-0675">Receptor</keyword>
<keyword id="KW-1185">Reference proteome</keyword>
<keyword id="KW-0677">Repeat</keyword>
<keyword id="KW-0716">Sensory transduction</keyword>
<keyword id="KW-0804">Transcription</keyword>
<keyword id="KW-0805">Transcription regulation</keyword>